<name>BRIX_SULTO</name>
<feature type="chain" id="PRO_0000120281" description="Probable Brix domain-containing ribosomal biogenesis protein">
    <location>
        <begin position="1"/>
        <end position="176"/>
    </location>
</feature>
<feature type="domain" description="Brix" evidence="1">
    <location>
        <begin position="6"/>
        <end position="176"/>
    </location>
</feature>
<sequence length="176" mass="20722">MLIHRIEIVFTSSRDAPLRVRTFLNELTYVFPNSIKINRGRQSLKDIIAKSIYLNSKYLVIIDVIKGNPGRFRVYDLTSKMLKYNFIIYGVTLLTELKLHRTLIKRGCIGKIEDQKIKNMLIDLGYIYIENCDVYANGDYIIKDNNYVFELKFTKDDKILGPVIRFQLYDRNKNIN</sequence>
<proteinExistence type="inferred from homology"/>
<evidence type="ECO:0000255" key="1">
    <source>
        <dbReference type="HAMAP-Rule" id="MF_00699"/>
    </source>
</evidence>
<organism>
    <name type="scientific">Sulfurisphaera tokodaii (strain DSM 16993 / JCM 10545 / NBRC 100140 / 7)</name>
    <name type="common">Sulfolobus tokodaii</name>
    <dbReference type="NCBI Taxonomy" id="273063"/>
    <lineage>
        <taxon>Archaea</taxon>
        <taxon>Thermoproteota</taxon>
        <taxon>Thermoprotei</taxon>
        <taxon>Sulfolobales</taxon>
        <taxon>Sulfolobaceae</taxon>
        <taxon>Sulfurisphaera</taxon>
    </lineage>
</organism>
<dbReference type="EMBL" id="BA000023">
    <property type="protein sequence ID" value="BAK54285.1"/>
    <property type="molecule type" value="Genomic_DNA"/>
</dbReference>
<dbReference type="RefSeq" id="WP_198429731.1">
    <property type="nucleotide sequence ID" value="NC_003106.2"/>
</dbReference>
<dbReference type="SMR" id="Q975H1"/>
<dbReference type="STRING" id="273063.STK_04410"/>
<dbReference type="GeneID" id="1458377"/>
<dbReference type="KEGG" id="sto:STK_04410"/>
<dbReference type="PATRIC" id="fig|273063.9.peg.512"/>
<dbReference type="eggNOG" id="arCOG03247">
    <property type="taxonomic scope" value="Archaea"/>
</dbReference>
<dbReference type="OrthoDB" id="117530at2157"/>
<dbReference type="Proteomes" id="UP000001015">
    <property type="component" value="Chromosome"/>
</dbReference>
<dbReference type="GO" id="GO:0019843">
    <property type="term" value="F:rRNA binding"/>
    <property type="evidence" value="ECO:0007669"/>
    <property type="project" value="InterPro"/>
</dbReference>
<dbReference type="GO" id="GO:0006364">
    <property type="term" value="P:rRNA processing"/>
    <property type="evidence" value="ECO:0007669"/>
    <property type="project" value="InterPro"/>
</dbReference>
<dbReference type="Gene3D" id="3.40.50.10480">
    <property type="entry name" value="Probable brix-domain ribosomal biogenesis protein"/>
    <property type="match status" value="1"/>
</dbReference>
<dbReference type="HAMAP" id="MF_00699">
    <property type="entry name" value="BriX"/>
    <property type="match status" value="1"/>
</dbReference>
<dbReference type="InterPro" id="IPR007109">
    <property type="entry name" value="Brix"/>
</dbReference>
<dbReference type="InterPro" id="IPR023548">
    <property type="entry name" value="Brix_dom_Rbsml_bgen_prot"/>
</dbReference>
<dbReference type="SMART" id="SM00879">
    <property type="entry name" value="Brix"/>
    <property type="match status" value="1"/>
</dbReference>
<dbReference type="SUPFAM" id="SSF52954">
    <property type="entry name" value="Class II aaRS ABD-related"/>
    <property type="match status" value="1"/>
</dbReference>
<dbReference type="PROSITE" id="PS50833">
    <property type="entry name" value="BRIX"/>
    <property type="match status" value="1"/>
</dbReference>
<gene>
    <name type="ordered locus">STK_04410</name>
</gene>
<accession>Q975H1</accession>
<accession>F9VMY8</accession>
<protein>
    <recommendedName>
        <fullName evidence="1">Probable Brix domain-containing ribosomal biogenesis protein</fullName>
    </recommendedName>
</protein>
<keyword id="KW-1185">Reference proteome</keyword>
<keyword id="KW-0690">Ribosome biogenesis</keyword>
<reference key="1">
    <citation type="journal article" date="2001" name="DNA Res.">
        <title>Complete genome sequence of an aerobic thermoacidophilic Crenarchaeon, Sulfolobus tokodaii strain7.</title>
        <authorList>
            <person name="Kawarabayasi Y."/>
            <person name="Hino Y."/>
            <person name="Horikawa H."/>
            <person name="Jin-no K."/>
            <person name="Takahashi M."/>
            <person name="Sekine M."/>
            <person name="Baba S."/>
            <person name="Ankai A."/>
            <person name="Kosugi H."/>
            <person name="Hosoyama A."/>
            <person name="Fukui S."/>
            <person name="Nagai Y."/>
            <person name="Nishijima K."/>
            <person name="Otsuka R."/>
            <person name="Nakazawa H."/>
            <person name="Takamiya M."/>
            <person name="Kato Y."/>
            <person name="Yoshizawa T."/>
            <person name="Tanaka T."/>
            <person name="Kudoh Y."/>
            <person name="Yamazaki J."/>
            <person name="Kushida N."/>
            <person name="Oguchi A."/>
            <person name="Aoki K."/>
            <person name="Masuda S."/>
            <person name="Yanagii M."/>
            <person name="Nishimura M."/>
            <person name="Yamagishi A."/>
            <person name="Oshima T."/>
            <person name="Kikuchi H."/>
        </authorList>
    </citation>
    <scope>NUCLEOTIDE SEQUENCE [LARGE SCALE GENOMIC DNA]</scope>
    <source>
        <strain>DSM 16993 / JCM 10545 / NBRC 100140 / 7</strain>
    </source>
</reference>
<comment type="function">
    <text evidence="1">Probably involved in the biogenesis of the ribosome.</text>
</comment>